<reference key="1">
    <citation type="journal article" date="2008" name="Genome Res.">
        <title>Comparative genome analysis of Salmonella enteritidis PT4 and Salmonella gallinarum 287/91 provides insights into evolutionary and host adaptation pathways.</title>
        <authorList>
            <person name="Thomson N.R."/>
            <person name="Clayton D.J."/>
            <person name="Windhorst D."/>
            <person name="Vernikos G."/>
            <person name="Davidson S."/>
            <person name="Churcher C."/>
            <person name="Quail M.A."/>
            <person name="Stevens M."/>
            <person name="Jones M.A."/>
            <person name="Watson M."/>
            <person name="Barron A."/>
            <person name="Layton A."/>
            <person name="Pickard D."/>
            <person name="Kingsley R.A."/>
            <person name="Bignell A."/>
            <person name="Clark L."/>
            <person name="Harris B."/>
            <person name="Ormond D."/>
            <person name="Abdellah Z."/>
            <person name="Brooks K."/>
            <person name="Cherevach I."/>
            <person name="Chillingworth T."/>
            <person name="Woodward J."/>
            <person name="Norberczak H."/>
            <person name="Lord A."/>
            <person name="Arrowsmith C."/>
            <person name="Jagels K."/>
            <person name="Moule S."/>
            <person name="Mungall K."/>
            <person name="Saunders M."/>
            <person name="Whitehead S."/>
            <person name="Chabalgoity J.A."/>
            <person name="Maskell D."/>
            <person name="Humphreys T."/>
            <person name="Roberts M."/>
            <person name="Barrow P.A."/>
            <person name="Dougan G."/>
            <person name="Parkhill J."/>
        </authorList>
    </citation>
    <scope>NUCLEOTIDE SEQUENCE [LARGE SCALE GENOMIC DNA]</scope>
    <source>
        <strain>P125109</strain>
    </source>
</reference>
<accession>B5QXR0</accession>
<name>TRMA_SALEP</name>
<sequence>MTPEHLPTEQYEAQLAEKVARLQSMMAPFSGLVPEVFRSPVSHYRMRAEFRLWHDGDDLYHIMFDQQTKSRIRVDTFPAASQLINTLMKAMIAGVRDNHALRHKLFQIDYLTTLSNQAVVSLLYHKKLDEEWREAATALRDALRAQGLNVHLIGRATKTKIELDQDYIDERLPVAGKEMIYRQVENSFTQPNAAMNIQMLEWALEVTKDSKGDLLELYCGNGNFSLALARNFNRVLATEIAKPSVAAAQYNIAANHIDNVQIIRMAAEEFTQAMNGVREFNRLQGIDLKRYQCETIFVDPPRSGLDSETEKMVQAYPRILYISCNPETLCKNLETLSQTHTVSRLALFDQFPYTHHMECGVLLTAR</sequence>
<proteinExistence type="inferred from homology"/>
<dbReference type="EC" id="2.1.1.-" evidence="1"/>
<dbReference type="EC" id="2.1.1.35" evidence="1"/>
<dbReference type="EMBL" id="AM933172">
    <property type="protein sequence ID" value="CAR35495.1"/>
    <property type="molecule type" value="Genomic_DNA"/>
</dbReference>
<dbReference type="RefSeq" id="WP_000186981.1">
    <property type="nucleotide sequence ID" value="NC_011294.1"/>
</dbReference>
<dbReference type="SMR" id="B5QXR0"/>
<dbReference type="KEGG" id="set:SEN3923"/>
<dbReference type="HOGENOM" id="CLU_043022_0_0_6"/>
<dbReference type="Proteomes" id="UP000000613">
    <property type="component" value="Chromosome"/>
</dbReference>
<dbReference type="GO" id="GO:0005829">
    <property type="term" value="C:cytosol"/>
    <property type="evidence" value="ECO:0007669"/>
    <property type="project" value="TreeGrafter"/>
</dbReference>
<dbReference type="GO" id="GO:0019843">
    <property type="term" value="F:rRNA binding"/>
    <property type="evidence" value="ECO:0007669"/>
    <property type="project" value="TreeGrafter"/>
</dbReference>
<dbReference type="GO" id="GO:0030697">
    <property type="term" value="F:tRNA (uracil(54)-C5)-methyltransferase activity, S-adenosyl methionine-dependent"/>
    <property type="evidence" value="ECO:0007669"/>
    <property type="project" value="UniProtKB-UniRule"/>
</dbReference>
<dbReference type="GO" id="GO:0000049">
    <property type="term" value="F:tRNA binding"/>
    <property type="evidence" value="ECO:0007669"/>
    <property type="project" value="TreeGrafter"/>
</dbReference>
<dbReference type="GO" id="GO:0030488">
    <property type="term" value="P:tRNA methylation"/>
    <property type="evidence" value="ECO:0007669"/>
    <property type="project" value="UniProtKB-UniRule"/>
</dbReference>
<dbReference type="CDD" id="cd02440">
    <property type="entry name" value="AdoMet_MTases"/>
    <property type="match status" value="1"/>
</dbReference>
<dbReference type="FunFam" id="2.40.50.1070:FF:000001">
    <property type="entry name" value="tRNA/tmRNA (uracil-C(5))-methyltransferase"/>
    <property type="match status" value="1"/>
</dbReference>
<dbReference type="FunFam" id="3.40.50.150:FF:000012">
    <property type="entry name" value="tRNA/tmRNA (uracil-C(5))-methyltransferase"/>
    <property type="match status" value="1"/>
</dbReference>
<dbReference type="Gene3D" id="2.40.50.1070">
    <property type="match status" value="1"/>
</dbReference>
<dbReference type="Gene3D" id="3.40.50.150">
    <property type="entry name" value="Vaccinia Virus protein VP39"/>
    <property type="match status" value="1"/>
</dbReference>
<dbReference type="HAMAP" id="MF_01011">
    <property type="entry name" value="RNA_methyltr_TrmA"/>
    <property type="match status" value="1"/>
</dbReference>
<dbReference type="InterPro" id="IPR030390">
    <property type="entry name" value="MeTrfase_TrmA_AS"/>
</dbReference>
<dbReference type="InterPro" id="IPR030391">
    <property type="entry name" value="MeTrfase_TrmA_CS"/>
</dbReference>
<dbReference type="InterPro" id="IPR029063">
    <property type="entry name" value="SAM-dependent_MTases_sf"/>
</dbReference>
<dbReference type="InterPro" id="IPR011869">
    <property type="entry name" value="TrmA_MeTrfase"/>
</dbReference>
<dbReference type="InterPro" id="IPR010280">
    <property type="entry name" value="U5_MeTrfase_fam"/>
</dbReference>
<dbReference type="NCBIfam" id="TIGR02143">
    <property type="entry name" value="trmA_only"/>
    <property type="match status" value="1"/>
</dbReference>
<dbReference type="PANTHER" id="PTHR47790">
    <property type="entry name" value="TRNA/TMRNA (URACIL-C(5))-METHYLTRANSFERASE"/>
    <property type="match status" value="1"/>
</dbReference>
<dbReference type="PANTHER" id="PTHR47790:SF2">
    <property type="entry name" value="TRNA_TMRNA (URACIL-C(5))-METHYLTRANSFERASE"/>
    <property type="match status" value="1"/>
</dbReference>
<dbReference type="Pfam" id="PF05958">
    <property type="entry name" value="tRNA_U5-meth_tr"/>
    <property type="match status" value="1"/>
</dbReference>
<dbReference type="SUPFAM" id="SSF53335">
    <property type="entry name" value="S-adenosyl-L-methionine-dependent methyltransferases"/>
    <property type="match status" value="1"/>
</dbReference>
<dbReference type="PROSITE" id="PS51687">
    <property type="entry name" value="SAM_MT_RNA_M5U"/>
    <property type="match status" value="1"/>
</dbReference>
<dbReference type="PROSITE" id="PS01230">
    <property type="entry name" value="TRMA_1"/>
    <property type="match status" value="1"/>
</dbReference>
<dbReference type="PROSITE" id="PS01231">
    <property type="entry name" value="TRMA_2"/>
    <property type="match status" value="1"/>
</dbReference>
<feature type="chain" id="PRO_1000198552" description="tRNA/tmRNA (uracil-C(5))-methyltransferase">
    <location>
        <begin position="1"/>
        <end position="366"/>
    </location>
</feature>
<feature type="active site" description="Nucleophile" evidence="1">
    <location>
        <position position="324"/>
    </location>
</feature>
<feature type="active site" description="Proton acceptor" evidence="1">
    <location>
        <position position="358"/>
    </location>
</feature>
<feature type="binding site" evidence="1">
    <location>
        <position position="190"/>
    </location>
    <ligand>
        <name>S-adenosyl-L-methionine</name>
        <dbReference type="ChEBI" id="CHEBI:59789"/>
    </ligand>
</feature>
<feature type="binding site" evidence="1">
    <location>
        <position position="218"/>
    </location>
    <ligand>
        <name>S-adenosyl-L-methionine</name>
        <dbReference type="ChEBI" id="CHEBI:59789"/>
    </ligand>
</feature>
<feature type="binding site" evidence="1">
    <location>
        <position position="223"/>
    </location>
    <ligand>
        <name>S-adenosyl-L-methionine</name>
        <dbReference type="ChEBI" id="CHEBI:59789"/>
    </ligand>
</feature>
<feature type="binding site" evidence="1">
    <location>
        <position position="239"/>
    </location>
    <ligand>
        <name>S-adenosyl-L-methionine</name>
        <dbReference type="ChEBI" id="CHEBI:59789"/>
    </ligand>
</feature>
<feature type="binding site" evidence="1">
    <location>
        <position position="299"/>
    </location>
    <ligand>
        <name>S-adenosyl-L-methionine</name>
        <dbReference type="ChEBI" id="CHEBI:59789"/>
    </ligand>
</feature>
<keyword id="KW-0489">Methyltransferase</keyword>
<keyword id="KW-0949">S-adenosyl-L-methionine</keyword>
<keyword id="KW-0808">Transferase</keyword>
<keyword id="KW-0819">tRNA processing</keyword>
<evidence type="ECO:0000255" key="1">
    <source>
        <dbReference type="HAMAP-Rule" id="MF_01011"/>
    </source>
</evidence>
<comment type="function">
    <text evidence="1">Dual-specificity methyltransferase that catalyzes the formation of 5-methyluridine at position 54 (m5U54) in all tRNAs, and that of position 341 (m5U341) in tmRNA (transfer-mRNA).</text>
</comment>
<comment type="catalytic activity">
    <reaction evidence="1">
        <text>uridine(54) in tRNA + S-adenosyl-L-methionine = 5-methyluridine(54) in tRNA + S-adenosyl-L-homocysteine + H(+)</text>
        <dbReference type="Rhea" id="RHEA:42712"/>
        <dbReference type="Rhea" id="RHEA-COMP:10167"/>
        <dbReference type="Rhea" id="RHEA-COMP:10193"/>
        <dbReference type="ChEBI" id="CHEBI:15378"/>
        <dbReference type="ChEBI" id="CHEBI:57856"/>
        <dbReference type="ChEBI" id="CHEBI:59789"/>
        <dbReference type="ChEBI" id="CHEBI:65315"/>
        <dbReference type="ChEBI" id="CHEBI:74447"/>
        <dbReference type="EC" id="2.1.1.35"/>
    </reaction>
</comment>
<comment type="catalytic activity">
    <reaction evidence="1">
        <text>uridine(341) in tmRNA + S-adenosyl-L-methionine = 5-methyluridine(341) in tmRNA + S-adenosyl-L-homocysteine + H(+)</text>
        <dbReference type="Rhea" id="RHEA:43612"/>
        <dbReference type="Rhea" id="RHEA-COMP:10630"/>
        <dbReference type="Rhea" id="RHEA-COMP:10631"/>
        <dbReference type="ChEBI" id="CHEBI:15378"/>
        <dbReference type="ChEBI" id="CHEBI:57856"/>
        <dbReference type="ChEBI" id="CHEBI:59789"/>
        <dbReference type="ChEBI" id="CHEBI:65315"/>
        <dbReference type="ChEBI" id="CHEBI:74447"/>
    </reaction>
</comment>
<comment type="similarity">
    <text evidence="1">Belongs to the class I-like SAM-binding methyltransferase superfamily. RNA M5U methyltransferase family. TrmA subfamily.</text>
</comment>
<gene>
    <name evidence="1" type="primary">trmA</name>
    <name type="ordered locus">SEN3923</name>
</gene>
<protein>
    <recommendedName>
        <fullName evidence="1">tRNA/tmRNA (uracil-C(5))-methyltransferase</fullName>
        <ecNumber evidence="1">2.1.1.-</ecNumber>
        <ecNumber evidence="1">2.1.1.35</ecNumber>
    </recommendedName>
    <alternativeName>
        <fullName evidence="1">tRNA (uracil(54)-C(5))-methyltransferase</fullName>
    </alternativeName>
    <alternativeName>
        <fullName evidence="1">tRNA(m5U54)-methyltransferase</fullName>
        <shortName evidence="1">RUMT</shortName>
    </alternativeName>
    <alternativeName>
        <fullName evidence="1">tmRNA (uracil(341)-C(5))-methyltransferase</fullName>
    </alternativeName>
</protein>
<organism>
    <name type="scientific">Salmonella enteritidis PT4 (strain P125109)</name>
    <dbReference type="NCBI Taxonomy" id="550537"/>
    <lineage>
        <taxon>Bacteria</taxon>
        <taxon>Pseudomonadati</taxon>
        <taxon>Pseudomonadota</taxon>
        <taxon>Gammaproteobacteria</taxon>
        <taxon>Enterobacterales</taxon>
        <taxon>Enterobacteriaceae</taxon>
        <taxon>Salmonella</taxon>
    </lineage>
</organism>